<feature type="chain" id="PRO_0000273784" description="Large ribosomal subunit protein uL30">
    <location>
        <begin position="1"/>
        <end position="59"/>
    </location>
</feature>
<protein>
    <recommendedName>
        <fullName evidence="1">Large ribosomal subunit protein uL30</fullName>
    </recommendedName>
    <alternativeName>
        <fullName evidence="2">50S ribosomal protein L30</fullName>
    </alternativeName>
</protein>
<reference key="1">
    <citation type="journal article" date="2006" name="Proc. Natl. Acad. Sci. U.S.A.">
        <title>Identification of genes subject to positive selection in uropathogenic strains of Escherichia coli: a comparative genomics approach.</title>
        <authorList>
            <person name="Chen S.L."/>
            <person name="Hung C.-S."/>
            <person name="Xu J."/>
            <person name="Reigstad C.S."/>
            <person name="Magrini V."/>
            <person name="Sabo A."/>
            <person name="Blasiar D."/>
            <person name="Bieri T."/>
            <person name="Meyer R.R."/>
            <person name="Ozersky P."/>
            <person name="Armstrong J.R."/>
            <person name="Fulton R.S."/>
            <person name="Latreille J.P."/>
            <person name="Spieth J."/>
            <person name="Hooton T.M."/>
            <person name="Mardis E.R."/>
            <person name="Hultgren S.J."/>
            <person name="Gordon J.I."/>
        </authorList>
    </citation>
    <scope>NUCLEOTIDE SEQUENCE [LARGE SCALE GENOMIC DNA]</scope>
    <source>
        <strain>UTI89 / UPEC</strain>
    </source>
</reference>
<organism>
    <name type="scientific">Escherichia coli (strain UTI89 / UPEC)</name>
    <dbReference type="NCBI Taxonomy" id="364106"/>
    <lineage>
        <taxon>Bacteria</taxon>
        <taxon>Pseudomonadati</taxon>
        <taxon>Pseudomonadota</taxon>
        <taxon>Gammaproteobacteria</taxon>
        <taxon>Enterobacterales</taxon>
        <taxon>Enterobacteriaceae</taxon>
        <taxon>Escherichia</taxon>
    </lineage>
</organism>
<name>RL30_ECOUT</name>
<keyword id="KW-0687">Ribonucleoprotein</keyword>
<keyword id="KW-0689">Ribosomal protein</keyword>
<gene>
    <name evidence="1" type="primary">rpmD</name>
    <name type="ordered locus">UTI89_C3748</name>
</gene>
<proteinExistence type="inferred from homology"/>
<dbReference type="EMBL" id="CP000243">
    <property type="protein sequence ID" value="ABE09185.1"/>
    <property type="molecule type" value="Genomic_DNA"/>
</dbReference>
<dbReference type="RefSeq" id="WP_001140433.1">
    <property type="nucleotide sequence ID" value="NZ_CP064825.1"/>
</dbReference>
<dbReference type="SMR" id="Q1R629"/>
<dbReference type="GeneID" id="93778685"/>
<dbReference type="KEGG" id="eci:UTI89_C3748"/>
<dbReference type="HOGENOM" id="CLU_131047_1_4_6"/>
<dbReference type="Proteomes" id="UP000001952">
    <property type="component" value="Chromosome"/>
</dbReference>
<dbReference type="GO" id="GO:0022625">
    <property type="term" value="C:cytosolic large ribosomal subunit"/>
    <property type="evidence" value="ECO:0007669"/>
    <property type="project" value="TreeGrafter"/>
</dbReference>
<dbReference type="GO" id="GO:0003735">
    <property type="term" value="F:structural constituent of ribosome"/>
    <property type="evidence" value="ECO:0007669"/>
    <property type="project" value="InterPro"/>
</dbReference>
<dbReference type="GO" id="GO:0006412">
    <property type="term" value="P:translation"/>
    <property type="evidence" value="ECO:0007669"/>
    <property type="project" value="UniProtKB-UniRule"/>
</dbReference>
<dbReference type="CDD" id="cd01658">
    <property type="entry name" value="Ribosomal_L30"/>
    <property type="match status" value="1"/>
</dbReference>
<dbReference type="FunFam" id="3.30.1390.20:FF:000001">
    <property type="entry name" value="50S ribosomal protein L30"/>
    <property type="match status" value="1"/>
</dbReference>
<dbReference type="Gene3D" id="3.30.1390.20">
    <property type="entry name" value="Ribosomal protein L30, ferredoxin-like fold domain"/>
    <property type="match status" value="1"/>
</dbReference>
<dbReference type="HAMAP" id="MF_01371_B">
    <property type="entry name" value="Ribosomal_uL30_B"/>
    <property type="match status" value="1"/>
</dbReference>
<dbReference type="InterPro" id="IPR036919">
    <property type="entry name" value="Ribo_uL30_ferredoxin-like_sf"/>
</dbReference>
<dbReference type="InterPro" id="IPR005996">
    <property type="entry name" value="Ribosomal_uL30_bac-type"/>
</dbReference>
<dbReference type="InterPro" id="IPR018038">
    <property type="entry name" value="Ribosomal_uL30_CS"/>
</dbReference>
<dbReference type="InterPro" id="IPR016082">
    <property type="entry name" value="Ribosomal_uL30_ferredoxin-like"/>
</dbReference>
<dbReference type="NCBIfam" id="TIGR01308">
    <property type="entry name" value="rpmD_bact"/>
    <property type="match status" value="1"/>
</dbReference>
<dbReference type="PANTHER" id="PTHR15892:SF2">
    <property type="entry name" value="LARGE RIBOSOMAL SUBUNIT PROTEIN UL30M"/>
    <property type="match status" value="1"/>
</dbReference>
<dbReference type="PANTHER" id="PTHR15892">
    <property type="entry name" value="MITOCHONDRIAL RIBOSOMAL PROTEIN L30"/>
    <property type="match status" value="1"/>
</dbReference>
<dbReference type="Pfam" id="PF00327">
    <property type="entry name" value="Ribosomal_L30"/>
    <property type="match status" value="1"/>
</dbReference>
<dbReference type="PIRSF" id="PIRSF002211">
    <property type="entry name" value="Ribosomal_L30_bac-type"/>
    <property type="match status" value="1"/>
</dbReference>
<dbReference type="SUPFAM" id="SSF55129">
    <property type="entry name" value="Ribosomal protein L30p/L7e"/>
    <property type="match status" value="1"/>
</dbReference>
<dbReference type="PROSITE" id="PS00634">
    <property type="entry name" value="RIBOSOMAL_L30"/>
    <property type="match status" value="1"/>
</dbReference>
<accession>Q1R629</accession>
<comment type="subunit">
    <text evidence="1">Part of the 50S ribosomal subunit.</text>
</comment>
<comment type="similarity">
    <text evidence="1">Belongs to the universal ribosomal protein uL30 family.</text>
</comment>
<evidence type="ECO:0000255" key="1">
    <source>
        <dbReference type="HAMAP-Rule" id="MF_01371"/>
    </source>
</evidence>
<evidence type="ECO:0000305" key="2"/>
<sequence>MAKTIKITQTRSAIGRLPKHKATLLGLGLRRIGHTVEREDTPAIRGMINAVSFMVKVEE</sequence>